<proteinExistence type="inferred from homology"/>
<accession>P26273</accession>
<accession>Q16DV2</accession>
<reference key="1">
    <citation type="journal article" date="1991" name="Mol. Microbiol.">
        <title>Organization of the genes coding for the reaction-centre L and M subunits and B870 antenna polypeptides alpha and beta from the aerobic photosynthetic bacterium Erythrobacter species OCH114.</title>
        <authorList>
            <person name="Liebetanz R."/>
            <person name="Hornberger U."/>
            <person name="Drews G."/>
        </authorList>
    </citation>
    <scope>NUCLEOTIDE SEQUENCE [GENOMIC DNA]</scope>
</reference>
<reference key="2">
    <citation type="journal article" date="2007" name="J. Bacteriol.">
        <title>The complete genome sequence of Roseobacter denitrificans reveals a mixotrophic rather than photosynthetic metabolism.</title>
        <authorList>
            <person name="Swingley W.D."/>
            <person name="Sadekar S."/>
            <person name="Mastrian S.D."/>
            <person name="Matthies H.J."/>
            <person name="Hao J."/>
            <person name="Ramos H."/>
            <person name="Acharya C.R."/>
            <person name="Conrad A.L."/>
            <person name="Taylor H.L."/>
            <person name="Dejesa L.C."/>
            <person name="Shah M.K."/>
            <person name="O'Huallachain M.E."/>
            <person name="Lince M.T."/>
            <person name="Blankenship R.E."/>
            <person name="Beatty J.T."/>
            <person name="Touchman J.W."/>
        </authorList>
    </citation>
    <scope>NUCLEOTIDE SEQUENCE [LARGE SCALE GENOMIC DNA]</scope>
    <source>
        <strain>ATCC 33942 / OCh 114</strain>
    </source>
</reference>
<name>LHA_ROSDO</name>
<gene>
    <name type="primary">pufA</name>
    <name type="ordered locus">RD1_0106</name>
</gene>
<keyword id="KW-0042">Antenna complex</keyword>
<keyword id="KW-0076">Bacteriochlorophyll</keyword>
<keyword id="KW-0997">Cell inner membrane</keyword>
<keyword id="KW-1003">Cell membrane</keyword>
<keyword id="KW-0148">Chlorophyll</keyword>
<keyword id="KW-0157">Chromophore</keyword>
<keyword id="KW-0437">Light-harvesting polypeptide</keyword>
<keyword id="KW-0460">Magnesium</keyword>
<keyword id="KW-0472">Membrane</keyword>
<keyword id="KW-0479">Metal-binding</keyword>
<keyword id="KW-1185">Reference proteome</keyword>
<keyword id="KW-0812">Transmembrane</keyword>
<keyword id="KW-1133">Transmembrane helix</keyword>
<protein>
    <recommendedName>
        <fullName>Light-harvesting protein B-870 alpha chain</fullName>
    </recommendedName>
    <alternativeName>
        <fullName>Antenna pigment protein alpha chain</fullName>
    </alternativeName>
</protein>
<sequence length="52" mass="5814">MAKFYKIWLIFDPRRVFVAQGVFLFLLAAMIHLVVLSSGLNWFEAAAAVGGQ</sequence>
<comment type="function">
    <text>Antenna complexes are light-harvesting systems, which transfer the excitation energy to the reaction centers.</text>
</comment>
<comment type="subunit">
    <text>The core complex is formed by different alpha and beta chains, binding bacteriochlorophyll molecules, and arranged most probably in tetrameric structures disposed around the reaction center. The non-pigmented gamma chains may constitute additional components.</text>
</comment>
<comment type="subcellular location">
    <subcellularLocation>
        <location>Cell inner membrane</location>
        <topology>Single-pass type II membrane protein</topology>
    </subcellularLocation>
</comment>
<comment type="similarity">
    <text evidence="2">Belongs to the antenna complex alpha subunit family.</text>
</comment>
<organism>
    <name type="scientific">Roseobacter denitrificans (strain ATCC 33942 / OCh 114)</name>
    <name type="common">Erythrobacter sp. (strain OCh 114)</name>
    <name type="synonym">Roseobacter denitrificans</name>
    <dbReference type="NCBI Taxonomy" id="375451"/>
    <lineage>
        <taxon>Bacteria</taxon>
        <taxon>Pseudomonadati</taxon>
        <taxon>Pseudomonadota</taxon>
        <taxon>Alphaproteobacteria</taxon>
        <taxon>Rhodobacterales</taxon>
        <taxon>Roseobacteraceae</taxon>
        <taxon>Roseobacter</taxon>
    </lineage>
</organism>
<dbReference type="EMBL" id="X57597">
    <property type="protein sequence ID" value="CAA40817.1"/>
    <property type="molecule type" value="Genomic_DNA"/>
</dbReference>
<dbReference type="EMBL" id="CP000362">
    <property type="protein sequence ID" value="ABG29841.1"/>
    <property type="molecule type" value="Genomic_DNA"/>
</dbReference>
<dbReference type="RefSeq" id="WP_011566463.1">
    <property type="nucleotide sequence ID" value="NC_008209.1"/>
</dbReference>
<dbReference type="SMR" id="P26273"/>
<dbReference type="STRING" id="375451.RD1_0106"/>
<dbReference type="KEGG" id="rde:RD1_0106"/>
<dbReference type="eggNOG" id="ENOG5032QBE">
    <property type="taxonomic scope" value="Bacteria"/>
</dbReference>
<dbReference type="HOGENOM" id="CLU_205201_0_0_5"/>
<dbReference type="OrthoDB" id="8564165at2"/>
<dbReference type="Proteomes" id="UP000007029">
    <property type="component" value="Chromosome"/>
</dbReference>
<dbReference type="GO" id="GO:0019866">
    <property type="term" value="C:organelle inner membrane"/>
    <property type="evidence" value="ECO:0007669"/>
    <property type="project" value="InterPro"/>
</dbReference>
<dbReference type="GO" id="GO:0005886">
    <property type="term" value="C:plasma membrane"/>
    <property type="evidence" value="ECO:0007669"/>
    <property type="project" value="UniProtKB-SubCell"/>
</dbReference>
<dbReference type="GO" id="GO:0030077">
    <property type="term" value="C:plasma membrane light-harvesting complex"/>
    <property type="evidence" value="ECO:0007669"/>
    <property type="project" value="InterPro"/>
</dbReference>
<dbReference type="GO" id="GO:0042314">
    <property type="term" value="F:bacteriochlorophyll binding"/>
    <property type="evidence" value="ECO:0007669"/>
    <property type="project" value="UniProtKB-KW"/>
</dbReference>
<dbReference type="GO" id="GO:0045156">
    <property type="term" value="F:electron transporter, transferring electrons within the cyclic electron transport pathway of photosynthesis activity"/>
    <property type="evidence" value="ECO:0007669"/>
    <property type="project" value="InterPro"/>
</dbReference>
<dbReference type="GO" id="GO:0046872">
    <property type="term" value="F:metal ion binding"/>
    <property type="evidence" value="ECO:0007669"/>
    <property type="project" value="UniProtKB-KW"/>
</dbReference>
<dbReference type="GO" id="GO:0019684">
    <property type="term" value="P:photosynthesis, light reaction"/>
    <property type="evidence" value="ECO:0007669"/>
    <property type="project" value="InterPro"/>
</dbReference>
<dbReference type="Gene3D" id="4.10.220.20">
    <property type="entry name" value="Light-harvesting complex"/>
    <property type="match status" value="1"/>
</dbReference>
<dbReference type="InterPro" id="IPR000066">
    <property type="entry name" value="Antenna_a/b"/>
</dbReference>
<dbReference type="InterPro" id="IPR018332">
    <property type="entry name" value="Antenna_alpha"/>
</dbReference>
<dbReference type="InterPro" id="IPR002361">
    <property type="entry name" value="Antenna_alpha_CS"/>
</dbReference>
<dbReference type="InterPro" id="IPR035889">
    <property type="entry name" value="Light-harvesting_complex"/>
</dbReference>
<dbReference type="NCBIfam" id="NF040861">
    <property type="entry name" value="pufA_517_ASD"/>
    <property type="match status" value="1"/>
</dbReference>
<dbReference type="Pfam" id="PF00556">
    <property type="entry name" value="LHC"/>
    <property type="match status" value="1"/>
</dbReference>
<dbReference type="SUPFAM" id="SSF56918">
    <property type="entry name" value="Light-harvesting complex subunits"/>
    <property type="match status" value="1"/>
</dbReference>
<dbReference type="PROSITE" id="PS00968">
    <property type="entry name" value="ANTENNA_COMP_ALPHA"/>
    <property type="match status" value="1"/>
</dbReference>
<evidence type="ECO:0000255" key="1"/>
<evidence type="ECO:0000305" key="2"/>
<feature type="chain" id="PRO_0000099783" description="Light-harvesting protein B-870 alpha chain">
    <location>
        <begin position="1"/>
        <end position="52"/>
    </location>
</feature>
<feature type="topological domain" description="Cytoplasmic" evidence="1">
    <location>
        <begin position="1"/>
        <end position="15"/>
    </location>
</feature>
<feature type="transmembrane region" description="Helical" evidence="1">
    <location>
        <begin position="16"/>
        <end position="36"/>
    </location>
</feature>
<feature type="topological domain" description="Periplasmic" evidence="1">
    <location>
        <begin position="37"/>
        <end position="52"/>
    </location>
</feature>
<feature type="binding site" description="axial binding residue" evidence="1">
    <location>
        <position position="32"/>
    </location>
    <ligand>
        <name>a bacteriochlorophyll</name>
        <dbReference type="ChEBI" id="CHEBI:38201"/>
    </ligand>
    <ligandPart>
        <name>Mg</name>
        <dbReference type="ChEBI" id="CHEBI:25107"/>
    </ligandPart>
</feature>